<proteinExistence type="evidence at protein level"/>
<keyword id="KW-0002">3D-structure</keyword>
<keyword id="KW-0042">Antenna complex</keyword>
<keyword id="KW-0076">Bacteriochlorophyll</keyword>
<keyword id="KW-0997">Cell inner membrane</keyword>
<keyword id="KW-1003">Cell membrane</keyword>
<keyword id="KW-0148">Chlorophyll</keyword>
<keyword id="KW-0157">Chromophore</keyword>
<keyword id="KW-0903">Direct protein sequencing</keyword>
<keyword id="KW-0437">Light-harvesting polypeptide</keyword>
<keyword id="KW-0460">Magnesium</keyword>
<keyword id="KW-0472">Membrane</keyword>
<keyword id="KW-0479">Metal-binding</keyword>
<keyword id="KW-0812">Transmembrane</keyword>
<keyword id="KW-1133">Transmembrane helix</keyword>
<reference key="1">
    <citation type="journal article" date="1989" name="EMBO J.">
        <title>Multiple copies of the coding regions for the light-harvesting B800-850 alpha- and beta-polypeptides are present in the Rhodopseudomonas palustris genome.</title>
        <authorList>
            <person name="Tadros M.H."/>
            <person name="Waterkamp K."/>
        </authorList>
    </citation>
    <scope>NUCLEOTIDE SEQUENCE [GENOMIC DNA]</scope>
    <scope>PROTEIN SEQUENCE OF 1-9</scope>
    <source>
        <strain>1E5</strain>
    </source>
</reference>
<reference key="2">
    <citation type="journal article" date="2004" name="Nat. Biotechnol.">
        <title>Complete genome sequence of the metabolically versatile photosynthetic bacterium Rhodopseudomonas palustris.</title>
        <authorList>
            <person name="Larimer F.W."/>
            <person name="Chain P."/>
            <person name="Hauser L."/>
            <person name="Lamerdin J.E."/>
            <person name="Malfatti S."/>
            <person name="Do L."/>
            <person name="Land M.L."/>
            <person name="Pelletier D.A."/>
            <person name="Beatty J.T."/>
            <person name="Lang A.S."/>
            <person name="Tabita F.R."/>
            <person name="Gibson J.L."/>
            <person name="Hanson T.E."/>
            <person name="Bobst C."/>
            <person name="Torres y Torres J.L."/>
            <person name="Peres C."/>
            <person name="Harrison F.H."/>
            <person name="Gibson J."/>
            <person name="Harwood C.S."/>
        </authorList>
    </citation>
    <scope>NUCLEOTIDE SEQUENCE [LARGE SCALE GENOMIC DNA]</scope>
    <source>
        <strain>ATCC BAA-98 / CGA009</strain>
    </source>
</reference>
<reference key="3">
    <citation type="book" date="1990" name="Current research in photosynthesis">
        <editorList>
            <person name="Baltscheffsky M."/>
        </editorList>
        <authorList>
            <person name="Brunisholz R.A."/>
            <person name="Evans M.B."/>
            <person name="Cogdell R.J."/>
            <person name="Frank G."/>
            <person name="Zuber H."/>
        </authorList>
    </citation>
    <scope>PROTEIN SEQUENCE OF 1-49</scope>
    <source>
        <strain>2.6.1 / French</strain>
    </source>
</reference>
<protein>
    <recommendedName>
        <fullName>Light-harvesting protein B-800-850 alpha chain A</fullName>
    </recommendedName>
    <alternativeName>
        <fullName>Antenna pigment protein alpha chain A</fullName>
    </alternativeName>
    <alternativeName>
        <fullName>LH II-A alpha</fullName>
    </alternativeName>
</protein>
<evidence type="ECO:0000255" key="1"/>
<evidence type="ECO:0000305" key="2"/>
<evidence type="ECO:0007829" key="3">
    <source>
        <dbReference type="PDB" id="7ZCU"/>
    </source>
</evidence>
<name>LHA1_RHOPA</name>
<sequence length="59" mass="6394">MNQARIWTVVKPTVGLPLLLGSVTVIAILVHFAVLSHTTWFSKYWNGKAAAIESSVNVG</sequence>
<feature type="chain" id="PRO_0000099796" description="Light-harvesting protein B-800-850 alpha chain A">
    <location>
        <begin position="1"/>
        <end position="59"/>
    </location>
</feature>
<feature type="topological domain" description="Cytoplasmic" evidence="1">
    <location>
        <begin position="1"/>
        <end position="11"/>
    </location>
</feature>
<feature type="transmembrane region" description="Helical" evidence="1">
    <location>
        <begin position="12"/>
        <end position="35"/>
    </location>
</feature>
<feature type="topological domain" description="Periplasmic" evidence="1">
    <location>
        <begin position="36"/>
        <end position="59"/>
    </location>
</feature>
<feature type="binding site" description="axial binding residue" evidence="1">
    <location>
        <position position="31"/>
    </location>
    <ligand>
        <name>a bacteriochlorophyll</name>
        <dbReference type="ChEBI" id="CHEBI:38201"/>
    </ligand>
    <ligandPart>
        <name>Mg</name>
        <dbReference type="ChEBI" id="CHEBI:25107"/>
    </ligandPart>
</feature>
<feature type="sequence variant" description="In strain: 2.6.1 / French.">
    <original>K</original>
    <variation>P</variation>
    <location>
        <position position="48"/>
    </location>
</feature>
<feature type="helix" evidence="3">
    <location>
        <begin position="4"/>
        <end position="8"/>
    </location>
</feature>
<feature type="helix" evidence="3">
    <location>
        <begin position="12"/>
        <end position="37"/>
    </location>
</feature>
<feature type="helix" evidence="3">
    <location>
        <begin position="40"/>
        <end position="46"/>
    </location>
</feature>
<gene>
    <name type="primary">pucAA</name>
    <name type="ordered locus">RPA2653</name>
</gene>
<accession>P35101</accession>
<comment type="function">
    <text>Antenna complexes are light-harvesting systems, which transfer the excitation energy to the reaction centers.</text>
</comment>
<comment type="subunit">
    <text>The core complex is formed by different alpha and beta chains, binding bacteriochlorophyll molecules, and arranged most probably in tetrameric structures disposed around the reaction center. The non-pigmented gamma chains may constitute additional components.</text>
</comment>
<comment type="subcellular location">
    <subcellularLocation>
        <location>Cell inner membrane</location>
        <topology>Single-pass type II membrane protein</topology>
    </subcellularLocation>
</comment>
<comment type="similarity">
    <text evidence="2">Belongs to the antenna complex alpha subunit family.</text>
</comment>
<dbReference type="EMBL" id="X64956">
    <property type="protein sequence ID" value="CAA46118.1"/>
    <property type="molecule type" value="Genomic_DNA"/>
</dbReference>
<dbReference type="EMBL" id="BX572601">
    <property type="protein sequence ID" value="CAE28094.1"/>
    <property type="molecule type" value="Genomic_DNA"/>
</dbReference>
<dbReference type="RefSeq" id="WP_011158203.1">
    <property type="nucleotide sequence ID" value="NZ_CP116810.1"/>
</dbReference>
<dbReference type="PDB" id="7ZCU">
    <property type="method" value="EM"/>
    <property type="resolution" value="2.70 A"/>
    <property type="chains" value="A/C/E/G/I/K/M/O/Q=1-59"/>
</dbReference>
<dbReference type="PDBsum" id="7ZCU"/>
<dbReference type="SMR" id="P35101"/>
<dbReference type="STRING" id="258594.RPA2653"/>
<dbReference type="eggNOG" id="ENOG5033EHH">
    <property type="taxonomic scope" value="Bacteria"/>
</dbReference>
<dbReference type="HOGENOM" id="CLU_202473_0_0_5"/>
<dbReference type="PhylomeDB" id="P35101"/>
<dbReference type="GO" id="GO:0019866">
    <property type="term" value="C:organelle inner membrane"/>
    <property type="evidence" value="ECO:0007669"/>
    <property type="project" value="InterPro"/>
</dbReference>
<dbReference type="GO" id="GO:0005886">
    <property type="term" value="C:plasma membrane"/>
    <property type="evidence" value="ECO:0007669"/>
    <property type="project" value="UniProtKB-SubCell"/>
</dbReference>
<dbReference type="GO" id="GO:0030077">
    <property type="term" value="C:plasma membrane light-harvesting complex"/>
    <property type="evidence" value="ECO:0007669"/>
    <property type="project" value="InterPro"/>
</dbReference>
<dbReference type="GO" id="GO:0042314">
    <property type="term" value="F:bacteriochlorophyll binding"/>
    <property type="evidence" value="ECO:0007669"/>
    <property type="project" value="UniProtKB-KW"/>
</dbReference>
<dbReference type="GO" id="GO:0045156">
    <property type="term" value="F:electron transporter, transferring electrons within the cyclic electron transport pathway of photosynthesis activity"/>
    <property type="evidence" value="ECO:0007669"/>
    <property type="project" value="InterPro"/>
</dbReference>
<dbReference type="GO" id="GO:0046872">
    <property type="term" value="F:metal ion binding"/>
    <property type="evidence" value="ECO:0007669"/>
    <property type="project" value="UniProtKB-KW"/>
</dbReference>
<dbReference type="GO" id="GO:0019684">
    <property type="term" value="P:photosynthesis, light reaction"/>
    <property type="evidence" value="ECO:0007669"/>
    <property type="project" value="InterPro"/>
</dbReference>
<dbReference type="Gene3D" id="4.10.220.20">
    <property type="entry name" value="Light-harvesting complex"/>
    <property type="match status" value="1"/>
</dbReference>
<dbReference type="InterPro" id="IPR000066">
    <property type="entry name" value="Antenna_a/b"/>
</dbReference>
<dbReference type="InterPro" id="IPR018332">
    <property type="entry name" value="Antenna_alpha"/>
</dbReference>
<dbReference type="InterPro" id="IPR002361">
    <property type="entry name" value="Antenna_alpha_CS"/>
</dbReference>
<dbReference type="InterPro" id="IPR035889">
    <property type="entry name" value="Light-harvesting_complex"/>
</dbReference>
<dbReference type="Pfam" id="PF00556">
    <property type="entry name" value="LHC"/>
    <property type="match status" value="1"/>
</dbReference>
<dbReference type="PRINTS" id="PR00673">
    <property type="entry name" value="LIGHTHARVSTA"/>
</dbReference>
<dbReference type="SUPFAM" id="SSF56918">
    <property type="entry name" value="Light-harvesting complex subunits"/>
    <property type="match status" value="1"/>
</dbReference>
<dbReference type="PROSITE" id="PS00968">
    <property type="entry name" value="ANTENNA_COMP_ALPHA"/>
    <property type="match status" value="1"/>
</dbReference>
<organism>
    <name type="scientific">Rhodopseudomonas palustris (strain ATCC BAA-98 / CGA009)</name>
    <dbReference type="NCBI Taxonomy" id="258594"/>
    <lineage>
        <taxon>Bacteria</taxon>
        <taxon>Pseudomonadati</taxon>
        <taxon>Pseudomonadota</taxon>
        <taxon>Alphaproteobacteria</taxon>
        <taxon>Hyphomicrobiales</taxon>
        <taxon>Nitrobacteraceae</taxon>
        <taxon>Rhodopseudomonas</taxon>
    </lineage>
</organism>